<organism>
    <name type="scientific">Escherichia fergusonii (strain ATCC 35469 / DSM 13698 / CCUG 18766 / IAM 14443 / JCM 21226 / LMG 7866 / NBRC 102419 / NCTC 12128 / CDC 0568-73)</name>
    <dbReference type="NCBI Taxonomy" id="585054"/>
    <lineage>
        <taxon>Bacteria</taxon>
        <taxon>Pseudomonadati</taxon>
        <taxon>Pseudomonadota</taxon>
        <taxon>Gammaproteobacteria</taxon>
        <taxon>Enterobacterales</taxon>
        <taxon>Enterobacteriaceae</taxon>
        <taxon>Escherichia</taxon>
    </lineage>
</organism>
<gene>
    <name evidence="1" type="primary">rpmC</name>
    <name type="ordered locus">EFER_3295</name>
</gene>
<protein>
    <recommendedName>
        <fullName evidence="1">Large ribosomal subunit protein uL29</fullName>
    </recommendedName>
    <alternativeName>
        <fullName evidence="2">50S ribosomal protein L29</fullName>
    </alternativeName>
</protein>
<evidence type="ECO:0000255" key="1">
    <source>
        <dbReference type="HAMAP-Rule" id="MF_00374"/>
    </source>
</evidence>
<evidence type="ECO:0000305" key="2"/>
<name>RL29_ESCF3</name>
<comment type="similarity">
    <text evidence="1">Belongs to the universal ribosomal protein uL29 family.</text>
</comment>
<accession>B7LRS8</accession>
<proteinExistence type="inferred from homology"/>
<sequence>MKAKELREKSVEELNTELLNLLREQFNLRMQAASGQLQQSHLLKQVRRDVARVKTLLNEKAGA</sequence>
<feature type="chain" id="PRO_1000121773" description="Large ribosomal subunit protein uL29">
    <location>
        <begin position="1"/>
        <end position="63"/>
    </location>
</feature>
<reference key="1">
    <citation type="journal article" date="2009" name="PLoS Genet.">
        <title>Organised genome dynamics in the Escherichia coli species results in highly diverse adaptive paths.</title>
        <authorList>
            <person name="Touchon M."/>
            <person name="Hoede C."/>
            <person name="Tenaillon O."/>
            <person name="Barbe V."/>
            <person name="Baeriswyl S."/>
            <person name="Bidet P."/>
            <person name="Bingen E."/>
            <person name="Bonacorsi S."/>
            <person name="Bouchier C."/>
            <person name="Bouvet O."/>
            <person name="Calteau A."/>
            <person name="Chiapello H."/>
            <person name="Clermont O."/>
            <person name="Cruveiller S."/>
            <person name="Danchin A."/>
            <person name="Diard M."/>
            <person name="Dossat C."/>
            <person name="Karoui M.E."/>
            <person name="Frapy E."/>
            <person name="Garry L."/>
            <person name="Ghigo J.M."/>
            <person name="Gilles A.M."/>
            <person name="Johnson J."/>
            <person name="Le Bouguenec C."/>
            <person name="Lescat M."/>
            <person name="Mangenot S."/>
            <person name="Martinez-Jehanne V."/>
            <person name="Matic I."/>
            <person name="Nassif X."/>
            <person name="Oztas S."/>
            <person name="Petit M.A."/>
            <person name="Pichon C."/>
            <person name="Rouy Z."/>
            <person name="Ruf C.S."/>
            <person name="Schneider D."/>
            <person name="Tourret J."/>
            <person name="Vacherie B."/>
            <person name="Vallenet D."/>
            <person name="Medigue C."/>
            <person name="Rocha E.P.C."/>
            <person name="Denamur E."/>
        </authorList>
    </citation>
    <scope>NUCLEOTIDE SEQUENCE [LARGE SCALE GENOMIC DNA]</scope>
    <source>
        <strain>ATCC 35469 / DSM 13698 / BCRC 15582 / CCUG 18766 / IAM 14443 / JCM 21226 / LMG 7866 / NBRC 102419 / NCTC 12128 / CDC 0568-73</strain>
    </source>
</reference>
<keyword id="KW-0687">Ribonucleoprotein</keyword>
<keyword id="KW-0689">Ribosomal protein</keyword>
<dbReference type="EMBL" id="CU928158">
    <property type="protein sequence ID" value="CAQ90775.1"/>
    <property type="molecule type" value="Genomic_DNA"/>
</dbReference>
<dbReference type="RefSeq" id="WP_000644741.1">
    <property type="nucleotide sequence ID" value="NC_011740.1"/>
</dbReference>
<dbReference type="SMR" id="B7LRS8"/>
<dbReference type="GeneID" id="93778675"/>
<dbReference type="KEGG" id="efe:EFER_3295"/>
<dbReference type="HOGENOM" id="CLU_158491_1_2_6"/>
<dbReference type="OrthoDB" id="9815192at2"/>
<dbReference type="Proteomes" id="UP000000745">
    <property type="component" value="Chromosome"/>
</dbReference>
<dbReference type="GO" id="GO:0022625">
    <property type="term" value="C:cytosolic large ribosomal subunit"/>
    <property type="evidence" value="ECO:0007669"/>
    <property type="project" value="TreeGrafter"/>
</dbReference>
<dbReference type="GO" id="GO:0003735">
    <property type="term" value="F:structural constituent of ribosome"/>
    <property type="evidence" value="ECO:0007669"/>
    <property type="project" value="InterPro"/>
</dbReference>
<dbReference type="GO" id="GO:0006412">
    <property type="term" value="P:translation"/>
    <property type="evidence" value="ECO:0007669"/>
    <property type="project" value="UniProtKB-UniRule"/>
</dbReference>
<dbReference type="CDD" id="cd00427">
    <property type="entry name" value="Ribosomal_L29_HIP"/>
    <property type="match status" value="1"/>
</dbReference>
<dbReference type="Gene3D" id="6.10.140.1970">
    <property type="match status" value="1"/>
</dbReference>
<dbReference type="HAMAP" id="MF_00374">
    <property type="entry name" value="Ribosomal_uL29"/>
    <property type="match status" value="1"/>
</dbReference>
<dbReference type="InterPro" id="IPR050063">
    <property type="entry name" value="Ribosomal_protein_uL29"/>
</dbReference>
<dbReference type="InterPro" id="IPR001854">
    <property type="entry name" value="Ribosomal_uL29"/>
</dbReference>
<dbReference type="InterPro" id="IPR018254">
    <property type="entry name" value="Ribosomal_uL29_CS"/>
</dbReference>
<dbReference type="InterPro" id="IPR036049">
    <property type="entry name" value="Ribosomal_uL29_sf"/>
</dbReference>
<dbReference type="NCBIfam" id="TIGR00012">
    <property type="entry name" value="L29"/>
    <property type="match status" value="1"/>
</dbReference>
<dbReference type="PANTHER" id="PTHR10916">
    <property type="entry name" value="60S RIBOSOMAL PROTEIN L35/50S RIBOSOMAL PROTEIN L29"/>
    <property type="match status" value="1"/>
</dbReference>
<dbReference type="PANTHER" id="PTHR10916:SF0">
    <property type="entry name" value="LARGE RIBOSOMAL SUBUNIT PROTEIN UL29C"/>
    <property type="match status" value="1"/>
</dbReference>
<dbReference type="Pfam" id="PF00831">
    <property type="entry name" value="Ribosomal_L29"/>
    <property type="match status" value="1"/>
</dbReference>
<dbReference type="SUPFAM" id="SSF46561">
    <property type="entry name" value="Ribosomal protein L29 (L29p)"/>
    <property type="match status" value="1"/>
</dbReference>
<dbReference type="PROSITE" id="PS00579">
    <property type="entry name" value="RIBOSOMAL_L29"/>
    <property type="match status" value="1"/>
</dbReference>